<proteinExistence type="inferred from homology"/>
<dbReference type="EC" id="6.1.1.20" evidence="1"/>
<dbReference type="EMBL" id="CP000853">
    <property type="protein sequence ID" value="ABW19510.1"/>
    <property type="molecule type" value="Genomic_DNA"/>
</dbReference>
<dbReference type="RefSeq" id="WP_012159822.1">
    <property type="nucleotide sequence ID" value="NC_009922.1"/>
</dbReference>
<dbReference type="SMR" id="A8MI78"/>
<dbReference type="STRING" id="350688.Clos_1972"/>
<dbReference type="KEGG" id="aoe:Clos_1972"/>
<dbReference type="eggNOG" id="COG0016">
    <property type="taxonomic scope" value="Bacteria"/>
</dbReference>
<dbReference type="HOGENOM" id="CLU_025086_0_1_9"/>
<dbReference type="OrthoDB" id="9800719at2"/>
<dbReference type="Proteomes" id="UP000000269">
    <property type="component" value="Chromosome"/>
</dbReference>
<dbReference type="GO" id="GO:0005737">
    <property type="term" value="C:cytoplasm"/>
    <property type="evidence" value="ECO:0007669"/>
    <property type="project" value="UniProtKB-SubCell"/>
</dbReference>
<dbReference type="GO" id="GO:0005524">
    <property type="term" value="F:ATP binding"/>
    <property type="evidence" value="ECO:0007669"/>
    <property type="project" value="UniProtKB-UniRule"/>
</dbReference>
<dbReference type="GO" id="GO:0140096">
    <property type="term" value="F:catalytic activity, acting on a protein"/>
    <property type="evidence" value="ECO:0007669"/>
    <property type="project" value="UniProtKB-ARBA"/>
</dbReference>
<dbReference type="GO" id="GO:0000287">
    <property type="term" value="F:magnesium ion binding"/>
    <property type="evidence" value="ECO:0007669"/>
    <property type="project" value="UniProtKB-UniRule"/>
</dbReference>
<dbReference type="GO" id="GO:0004826">
    <property type="term" value="F:phenylalanine-tRNA ligase activity"/>
    <property type="evidence" value="ECO:0007669"/>
    <property type="project" value="UniProtKB-UniRule"/>
</dbReference>
<dbReference type="GO" id="GO:0016740">
    <property type="term" value="F:transferase activity"/>
    <property type="evidence" value="ECO:0007669"/>
    <property type="project" value="UniProtKB-ARBA"/>
</dbReference>
<dbReference type="GO" id="GO:0000049">
    <property type="term" value="F:tRNA binding"/>
    <property type="evidence" value="ECO:0007669"/>
    <property type="project" value="InterPro"/>
</dbReference>
<dbReference type="GO" id="GO:0006432">
    <property type="term" value="P:phenylalanyl-tRNA aminoacylation"/>
    <property type="evidence" value="ECO:0007669"/>
    <property type="project" value="UniProtKB-UniRule"/>
</dbReference>
<dbReference type="CDD" id="cd00496">
    <property type="entry name" value="PheRS_alpha_core"/>
    <property type="match status" value="1"/>
</dbReference>
<dbReference type="FunFam" id="3.30.930.10:FF:000003">
    <property type="entry name" value="Phenylalanine--tRNA ligase alpha subunit"/>
    <property type="match status" value="1"/>
</dbReference>
<dbReference type="Gene3D" id="3.30.930.10">
    <property type="entry name" value="Bira Bifunctional Protein, Domain 2"/>
    <property type="match status" value="1"/>
</dbReference>
<dbReference type="HAMAP" id="MF_00281">
    <property type="entry name" value="Phe_tRNA_synth_alpha1"/>
    <property type="match status" value="1"/>
</dbReference>
<dbReference type="InterPro" id="IPR006195">
    <property type="entry name" value="aa-tRNA-synth_II"/>
</dbReference>
<dbReference type="InterPro" id="IPR045864">
    <property type="entry name" value="aa-tRNA-synth_II/BPL/LPL"/>
</dbReference>
<dbReference type="InterPro" id="IPR004529">
    <property type="entry name" value="Phe-tRNA-synth_IIc_asu"/>
</dbReference>
<dbReference type="InterPro" id="IPR004188">
    <property type="entry name" value="Phe-tRNA_ligase_II_N"/>
</dbReference>
<dbReference type="InterPro" id="IPR022911">
    <property type="entry name" value="Phe_tRNA_ligase_alpha1_bac"/>
</dbReference>
<dbReference type="InterPro" id="IPR002319">
    <property type="entry name" value="Phenylalanyl-tRNA_Synthase"/>
</dbReference>
<dbReference type="InterPro" id="IPR010978">
    <property type="entry name" value="tRNA-bd_arm"/>
</dbReference>
<dbReference type="NCBIfam" id="TIGR00468">
    <property type="entry name" value="pheS"/>
    <property type="match status" value="1"/>
</dbReference>
<dbReference type="PANTHER" id="PTHR11538:SF41">
    <property type="entry name" value="PHENYLALANINE--TRNA LIGASE, MITOCHONDRIAL"/>
    <property type="match status" value="1"/>
</dbReference>
<dbReference type="PANTHER" id="PTHR11538">
    <property type="entry name" value="PHENYLALANYL-TRNA SYNTHETASE"/>
    <property type="match status" value="1"/>
</dbReference>
<dbReference type="Pfam" id="PF02912">
    <property type="entry name" value="Phe_tRNA-synt_N"/>
    <property type="match status" value="1"/>
</dbReference>
<dbReference type="Pfam" id="PF01409">
    <property type="entry name" value="tRNA-synt_2d"/>
    <property type="match status" value="1"/>
</dbReference>
<dbReference type="SUPFAM" id="SSF55681">
    <property type="entry name" value="Class II aaRS and biotin synthetases"/>
    <property type="match status" value="1"/>
</dbReference>
<dbReference type="SUPFAM" id="SSF46589">
    <property type="entry name" value="tRNA-binding arm"/>
    <property type="match status" value="1"/>
</dbReference>
<dbReference type="PROSITE" id="PS50862">
    <property type="entry name" value="AA_TRNA_LIGASE_II"/>
    <property type="match status" value="1"/>
</dbReference>
<comment type="catalytic activity">
    <reaction evidence="1">
        <text>tRNA(Phe) + L-phenylalanine + ATP = L-phenylalanyl-tRNA(Phe) + AMP + diphosphate + H(+)</text>
        <dbReference type="Rhea" id="RHEA:19413"/>
        <dbReference type="Rhea" id="RHEA-COMP:9668"/>
        <dbReference type="Rhea" id="RHEA-COMP:9699"/>
        <dbReference type="ChEBI" id="CHEBI:15378"/>
        <dbReference type="ChEBI" id="CHEBI:30616"/>
        <dbReference type="ChEBI" id="CHEBI:33019"/>
        <dbReference type="ChEBI" id="CHEBI:58095"/>
        <dbReference type="ChEBI" id="CHEBI:78442"/>
        <dbReference type="ChEBI" id="CHEBI:78531"/>
        <dbReference type="ChEBI" id="CHEBI:456215"/>
        <dbReference type="EC" id="6.1.1.20"/>
    </reaction>
</comment>
<comment type="cofactor">
    <cofactor evidence="1">
        <name>Mg(2+)</name>
        <dbReference type="ChEBI" id="CHEBI:18420"/>
    </cofactor>
    <text evidence="1">Binds 2 magnesium ions per tetramer.</text>
</comment>
<comment type="subunit">
    <text evidence="1">Tetramer of two alpha and two beta subunits.</text>
</comment>
<comment type="subcellular location">
    <subcellularLocation>
        <location evidence="1">Cytoplasm</location>
    </subcellularLocation>
</comment>
<comment type="similarity">
    <text evidence="1">Belongs to the class-II aminoacyl-tRNA synthetase family. Phe-tRNA synthetase alpha subunit type 1 subfamily.</text>
</comment>
<keyword id="KW-0030">Aminoacyl-tRNA synthetase</keyword>
<keyword id="KW-0067">ATP-binding</keyword>
<keyword id="KW-0963">Cytoplasm</keyword>
<keyword id="KW-0436">Ligase</keyword>
<keyword id="KW-0460">Magnesium</keyword>
<keyword id="KW-0479">Metal-binding</keyword>
<keyword id="KW-0547">Nucleotide-binding</keyword>
<keyword id="KW-0648">Protein biosynthesis</keyword>
<keyword id="KW-1185">Reference proteome</keyword>
<evidence type="ECO:0000255" key="1">
    <source>
        <dbReference type="HAMAP-Rule" id="MF_00281"/>
    </source>
</evidence>
<reference key="1">
    <citation type="submission" date="2007-10" db="EMBL/GenBank/DDBJ databases">
        <title>Complete genome of Alkaliphilus oremlandii OhILAs.</title>
        <authorList>
            <person name="Copeland A."/>
            <person name="Lucas S."/>
            <person name="Lapidus A."/>
            <person name="Barry K."/>
            <person name="Detter J.C."/>
            <person name="Glavina del Rio T."/>
            <person name="Hammon N."/>
            <person name="Israni S."/>
            <person name="Dalin E."/>
            <person name="Tice H."/>
            <person name="Pitluck S."/>
            <person name="Chain P."/>
            <person name="Malfatti S."/>
            <person name="Shin M."/>
            <person name="Vergez L."/>
            <person name="Schmutz J."/>
            <person name="Larimer F."/>
            <person name="Land M."/>
            <person name="Hauser L."/>
            <person name="Kyrpides N."/>
            <person name="Mikhailova N."/>
            <person name="Stolz J.F."/>
            <person name="Dawson A."/>
            <person name="Fisher E."/>
            <person name="Crable B."/>
            <person name="Perera E."/>
            <person name="Lisak J."/>
            <person name="Ranganathan M."/>
            <person name="Basu P."/>
            <person name="Richardson P."/>
        </authorList>
    </citation>
    <scope>NUCLEOTIDE SEQUENCE [LARGE SCALE GENOMIC DNA]</scope>
    <source>
        <strain>OhILAs</strain>
    </source>
</reference>
<protein>
    <recommendedName>
        <fullName evidence="1">Phenylalanine--tRNA ligase alpha subunit</fullName>
        <ecNumber evidence="1">6.1.1.20</ecNumber>
    </recommendedName>
    <alternativeName>
        <fullName evidence="1">Phenylalanyl-tRNA synthetase alpha subunit</fullName>
        <shortName evidence="1">PheRS</shortName>
    </alternativeName>
</protein>
<sequence>MEAKLKALEEKAKLEISQADSTAVLEQARVHYLGKKGELTEILRGMGALSAEERPLVGKIANLVRENIEAALEEAKATVKSKELEKKLMAETIDVTMPGKAIKLGKKHPLTQAMDDLKEIFISMGFKVVEGPEIETVYYNFDGLNAAKNHPSRDMSDTFYFNENTILRTQTSPVQVRTMEKSKPPIRIVSLGRCFRNDTPDATHSPMFHQIEGLVVDEGITMGDLKGTLEVFAKNFFGEDTKIKFRPHNFPFTEPSAEVDATCFKCGGKGCGVCKGNGWIEVLGAGMVHPNVLRNCGIDPEIYSGFAFGMGIDRLTMQKYGIDDIRLLFENDMRFIDQF</sequence>
<accession>A8MI78</accession>
<gene>
    <name evidence="1" type="primary">pheS</name>
    <name type="ordered locus">Clos_1972</name>
</gene>
<organism>
    <name type="scientific">Alkaliphilus oremlandii (strain OhILAs)</name>
    <name type="common">Clostridium oremlandii (strain OhILAs)</name>
    <dbReference type="NCBI Taxonomy" id="350688"/>
    <lineage>
        <taxon>Bacteria</taxon>
        <taxon>Bacillati</taxon>
        <taxon>Bacillota</taxon>
        <taxon>Clostridia</taxon>
        <taxon>Peptostreptococcales</taxon>
        <taxon>Natronincolaceae</taxon>
        <taxon>Alkaliphilus</taxon>
    </lineage>
</organism>
<name>SYFA_ALKOO</name>
<feature type="chain" id="PRO_1000059234" description="Phenylalanine--tRNA ligase alpha subunit">
    <location>
        <begin position="1"/>
        <end position="339"/>
    </location>
</feature>
<feature type="binding site" evidence="1">
    <location>
        <position position="254"/>
    </location>
    <ligand>
        <name>Mg(2+)</name>
        <dbReference type="ChEBI" id="CHEBI:18420"/>
        <note>shared with beta subunit</note>
    </ligand>
</feature>